<keyword id="KW-0002">3D-structure</keyword>
<keyword id="KW-0025">Alternative splicing</keyword>
<keyword id="KW-0067">ATP-binding</keyword>
<keyword id="KW-1003">Cell membrane</keyword>
<keyword id="KW-0903">Direct protein sequencing</keyword>
<keyword id="KW-0375">Hydrogen ion transport</keyword>
<keyword id="KW-0406">Ion transport</keyword>
<keyword id="KW-0460">Magnesium</keyword>
<keyword id="KW-0472">Membrane</keyword>
<keyword id="KW-0479">Metal-binding</keyword>
<keyword id="KW-0547">Nucleotide-binding</keyword>
<keyword id="KW-0597">Phosphoprotein</keyword>
<keyword id="KW-0630">Potassium</keyword>
<keyword id="KW-0633">Potassium transport</keyword>
<keyword id="KW-1185">Reference proteome</keyword>
<keyword id="KW-0915">Sodium</keyword>
<keyword id="KW-0739">Sodium transport</keyword>
<keyword id="KW-1278">Translocase</keyword>
<keyword id="KW-0812">Transmembrane</keyword>
<keyword id="KW-1133">Transmembrane helix</keyword>
<keyword id="KW-0813">Transport</keyword>
<accession>P54708</accession>
<reference key="1">
    <citation type="journal article" date="1992" name="J. Biol. Chem.">
        <title>Isolation and characterization of a cDNA encoding the putative distal colon H+,K(+)-ATPase. Similarity of deduced amino acid sequence to gastric H+,K(+)-ATPase and Na+,K(+)-ATPase and mRNA expression in distal colon, kidney, and uterus.</title>
        <authorList>
            <person name="Crowson M.S."/>
            <person name="Shull G.E."/>
        </authorList>
    </citation>
    <scope>NUCLEOTIDE SEQUENCE (ISOFORM LONG)</scope>
    <source>
        <strain>Sprague-Dawley</strain>
        <tissue>Colon</tissue>
    </source>
</reference>
<reference key="2">
    <citation type="journal article" date="1998" name="J. Biol. Chem.">
        <title>A novel N-terminal splice variant of the rat H+-K+-ATPase alpha2 subunit. Cloning, functional expression, and renal adaptive response to chronic hypokalemia.</title>
        <authorList>
            <person name="Kone B.C."/>
            <person name="Higham S.C."/>
        </authorList>
    </citation>
    <scope>NUCLEOTIDE SEQUENCE [GENOMIC DNA / MRNA] (ISOFORMS LONG AND SHORT)</scope>
    <source>
        <strain>Sprague-Dawley</strain>
        <tissue>Kidney</tissue>
    </source>
</reference>
<reference key="3">
    <citation type="submission" date="2007-07" db="UniProtKB">
        <authorList>
            <person name="Lubec G."/>
            <person name="Kang S.U."/>
        </authorList>
    </citation>
    <scope>PROTEIN SEQUENCE OF 779-785</scope>
    <scope>IDENTIFICATION BY MASS SPECTROMETRY</scope>
    <source>
        <strain>Sprague-Dawley</strain>
        <tissue>Brain</tissue>
    </source>
</reference>
<reference key="4">
    <citation type="journal article" date="1995" name="J. Clin. Invest.">
        <title>Functional expression and segmental localization of rat colonic K-adenosine triphosphatase.</title>
        <authorList>
            <person name="Lee J."/>
            <person name="Rajendran V.M."/>
            <person name="Mann A.S."/>
            <person name="Kashgarian M."/>
            <person name="Binder H.J."/>
        </authorList>
    </citation>
    <scope>FUNCTION</scope>
    <scope>CATALYTIC ACTIVITY</scope>
    <scope>ACTIVITY REGULATION</scope>
    <scope>SUBCELLULAR LOCATION</scope>
    <scope>TISSUE SPECIFICITY</scope>
</reference>
<reference key="5">
    <citation type="journal article" date="1998" name="FEBS Lett.">
        <title>Ouabain-sensitive H,K-ATPase: tissue-specific expression of the mammalian genes encoding the catalytic alpha subunit.</title>
        <authorList>
            <person name="Pestov N.B."/>
            <person name="Romanova L.G."/>
            <person name="Korneenko T.V."/>
            <person name="Egorov M.V."/>
            <person name="Kostina M.B."/>
            <person name="Sverdlov V.E."/>
            <person name="Askari A."/>
            <person name="Shakhparonov M.I."/>
            <person name="Modyanov N.N."/>
        </authorList>
    </citation>
    <scope>TISSUE SPECIFICITY</scope>
</reference>
<reference key="6">
    <citation type="journal article" date="1999" name="Am. J. Physiol.">
        <title>Colonic H-K-ATPase beta-subunit: identification in apical membranes and regulation by dietary K depletion.</title>
        <authorList>
            <person name="Sangan P."/>
            <person name="Kolla S.S."/>
            <person name="Rajendran V.M."/>
            <person name="Kashgarian M."/>
            <person name="Binder H.J."/>
        </authorList>
    </citation>
    <scope>INTERACTION WITH ATP1B3</scope>
    <scope>SUBCELLULAR LOCATION</scope>
</reference>
<reference key="7">
    <citation type="journal article" date="2000" name="Am. J. Physiol.">
        <title>Colonic H-K-ATPase alpha- and beta-subunits express ouabain-insensitive H-K-ATPase.</title>
        <authorList>
            <person name="Sangan P."/>
            <person name="Thevananther S."/>
            <person name="Sangan S."/>
            <person name="Rajendran V.M."/>
            <person name="Binder H.J."/>
        </authorList>
    </citation>
    <scope>FUNCTION</scope>
    <scope>CATALYTIC ACTIVITY</scope>
    <scope>ACTIVITY REGULATION</scope>
</reference>
<reference key="8">
    <citation type="journal article" date="2004" name="Am. J. Physiol.">
        <title>Identification of the beta-subunit for nongastric H-K-ATPase in rat anterior prostate.</title>
        <authorList>
            <person name="Pestov N.B."/>
            <person name="Korneenko T.V."/>
            <person name="Radkov R."/>
            <person name="Zhao H."/>
            <person name="Shakhparonov M.I."/>
            <person name="Modyanov N.N."/>
        </authorList>
    </citation>
    <scope>INTERACTION WITH ATP1B1</scope>
    <scope>SUBCELLULAR LOCATION</scope>
    <scope>TISSUE SPECIFICITY</scope>
</reference>
<comment type="function">
    <text evidence="2 4 7 9">The catalytic subunit of a H(+)/K(+) ATPase and/or Na(+)/K(+) ATPase pump which transports K(+) ions in exchange for Na(+) and/or H(+) ions across the apical membrane of epithelial cells. Uses ATP as an energy source to pump K(+) ions into the cell while transporting Na(+) and/or H(+) ions to the extracellular compartment (PubMed:10644526, PubMed:7560093). Involved in the maintenance of electrolyte homeostasis through K(+) ion absorption in kidney and colon (By similarity). In the airway epithelium, may play a primary role in mucus acidification regulating its viscosity and clearance (By similarity).</text>
</comment>
<comment type="catalytic activity">
    <reaction evidence="7 9">
        <text>K(+)(out) + ATP + H2O + H(+)(in) = K(+)(in) + ADP + phosphate + 2 H(+)(out)</text>
        <dbReference type="Rhea" id="RHEA:22044"/>
        <dbReference type="ChEBI" id="CHEBI:15377"/>
        <dbReference type="ChEBI" id="CHEBI:15378"/>
        <dbReference type="ChEBI" id="CHEBI:29103"/>
        <dbReference type="ChEBI" id="CHEBI:30616"/>
        <dbReference type="ChEBI" id="CHEBI:43474"/>
        <dbReference type="ChEBI" id="CHEBI:456216"/>
        <dbReference type="EC" id="7.2.2.19"/>
    </reaction>
    <physiologicalReaction direction="left-to-right" evidence="14 15">
        <dbReference type="Rhea" id="RHEA:22045"/>
    </physiologicalReaction>
</comment>
<comment type="catalytic activity">
    <reaction evidence="7 9">
        <text>K(+)(out) + Na(+)(in) + ATP + H2O = K(+)(in) + Na(+)(out) + ADP + phosphate + H(+)</text>
        <dbReference type="Rhea" id="RHEA:18353"/>
        <dbReference type="ChEBI" id="CHEBI:15377"/>
        <dbReference type="ChEBI" id="CHEBI:15378"/>
        <dbReference type="ChEBI" id="CHEBI:29101"/>
        <dbReference type="ChEBI" id="CHEBI:29103"/>
        <dbReference type="ChEBI" id="CHEBI:30616"/>
        <dbReference type="ChEBI" id="CHEBI:43474"/>
        <dbReference type="ChEBI" id="CHEBI:456216"/>
        <dbReference type="EC" id="7.2.2.13"/>
    </reaction>
    <physiologicalReaction direction="left-to-right" evidence="14 15">
        <dbReference type="Rhea" id="RHEA:18354"/>
    </physiologicalReaction>
</comment>
<comment type="activity regulation">
    <text evidence="7 9">Up-regulated by K(+) ions in a dose-dependent way.</text>
</comment>
<comment type="subunit">
    <text evidence="2 8 11">The ATPase pump is composed of a catalytic alpha subunit and an auxiliary non-catalytic beta subunit. The alpha subunit pairs with the beta subunit of gastric H(+)/K(+) ATPase ATP4B or the beta subunit of Na(+)/K(+) ATPases ATP1B1 and ATP1B3; this interaction is required for the formation of a functionally active pump and its targeting at the plasma membrane.</text>
</comment>
<comment type="subcellular location">
    <subcellularLocation>
        <location evidence="8 9 11">Apical cell membrane</location>
        <topology evidence="5">Multi-pass membrane protein</topology>
    </subcellularLocation>
</comment>
<comment type="alternative products">
    <event type="alternative splicing"/>
    <isoform>
        <id>P54708-1</id>
        <name>Long</name>
        <name>2a</name>
        <sequence type="displayed"/>
    </isoform>
    <isoform>
        <id>P54708-2</id>
        <name>Short</name>
        <name>2b</name>
        <sequence type="described" ref="VSP_000414"/>
    </isoform>
</comment>
<comment type="tissue specificity">
    <text evidence="8 9 10">Expressed at high levels in distal colon, coagulating and preputial glands; at much lower levels in proximal colon, kidney, uterus, brain, placenta and lung; and at trace levels in heart and forestomach (PubMed:9872395). Expressed in distal colon epithelium (at protein level) (PubMed:7560093). Expressed in anterior prostate (at protein level) (PubMed:14749213).</text>
</comment>
<comment type="similarity">
    <text evidence="13">Belongs to the cation transport ATPase (P-type) (TC 3.A.3) family. Type IIC subfamily.</text>
</comment>
<organism>
    <name type="scientific">Rattus norvegicus</name>
    <name type="common">Rat</name>
    <dbReference type="NCBI Taxonomy" id="10116"/>
    <lineage>
        <taxon>Eukaryota</taxon>
        <taxon>Metazoa</taxon>
        <taxon>Chordata</taxon>
        <taxon>Craniata</taxon>
        <taxon>Vertebrata</taxon>
        <taxon>Euteleostomi</taxon>
        <taxon>Mammalia</taxon>
        <taxon>Eutheria</taxon>
        <taxon>Euarchontoglires</taxon>
        <taxon>Glires</taxon>
        <taxon>Rodentia</taxon>
        <taxon>Myomorpha</taxon>
        <taxon>Muroidea</taxon>
        <taxon>Muridae</taxon>
        <taxon>Murinae</taxon>
        <taxon>Rattus</taxon>
    </lineage>
</organism>
<gene>
    <name type="primary">Atp12a</name>
    <name type="synonym">Atp1al1</name>
</gene>
<feature type="chain" id="PRO_0000046263" description="Potassium-transporting ATPase alpha chain 2">
    <location>
        <begin position="1"/>
        <end position="1036"/>
    </location>
</feature>
<feature type="topological domain" description="Cytoplasmic" evidence="5">
    <location>
        <begin position="1"/>
        <end position="99"/>
    </location>
</feature>
<feature type="transmembrane region" description="Helical" evidence="5">
    <location>
        <begin position="100"/>
        <end position="120"/>
    </location>
</feature>
<feature type="topological domain" description="Lumenal" evidence="5">
    <location>
        <begin position="121"/>
        <end position="143"/>
    </location>
</feature>
<feature type="transmembrane region" description="Helical" evidence="5">
    <location>
        <begin position="144"/>
        <end position="164"/>
    </location>
</feature>
<feature type="topological domain" description="Cytoplasmic" evidence="5">
    <location>
        <begin position="165"/>
        <end position="300"/>
    </location>
</feature>
<feature type="transmembrane region" description="Helical" evidence="5">
    <location>
        <begin position="301"/>
        <end position="320"/>
    </location>
</feature>
<feature type="topological domain" description="Lumenal" evidence="5">
    <location>
        <begin position="321"/>
        <end position="332"/>
    </location>
</feature>
<feature type="transmembrane region" description="Helical" evidence="5">
    <location>
        <begin position="333"/>
        <end position="350"/>
    </location>
</feature>
<feature type="topological domain" description="Cytoplasmic" evidence="5">
    <location>
        <begin position="351"/>
        <end position="784"/>
    </location>
</feature>
<feature type="transmembrane region" description="Helical" evidence="5">
    <location>
        <begin position="785"/>
        <end position="804"/>
    </location>
</feature>
<feature type="topological domain" description="Lumenal" evidence="5">
    <location>
        <begin position="805"/>
        <end position="814"/>
    </location>
</feature>
<feature type="transmembrane region" description="Helical" evidence="5">
    <location>
        <begin position="815"/>
        <end position="835"/>
    </location>
</feature>
<feature type="topological domain" description="Cytoplasmic" evidence="5">
    <location>
        <begin position="836"/>
        <end position="855"/>
    </location>
</feature>
<feature type="transmembrane region" description="Helical" evidence="5">
    <location>
        <begin position="856"/>
        <end position="878"/>
    </location>
</feature>
<feature type="topological domain" description="Lumenal" evidence="5">
    <location>
        <begin position="879"/>
        <end position="930"/>
    </location>
</feature>
<feature type="transmembrane region" description="Helical" evidence="5">
    <location>
        <begin position="931"/>
        <end position="950"/>
    </location>
</feature>
<feature type="topological domain" description="Cytoplasmic" evidence="5">
    <location>
        <begin position="951"/>
        <end position="964"/>
    </location>
</feature>
<feature type="transmembrane region" description="Helical" evidence="5">
    <location>
        <begin position="965"/>
        <end position="983"/>
    </location>
</feature>
<feature type="topological domain" description="Lumenal" evidence="5">
    <location>
        <begin position="984"/>
        <end position="998"/>
    </location>
</feature>
<feature type="transmembrane region" description="Helical" evidence="5">
    <location>
        <begin position="999"/>
        <end position="1019"/>
    </location>
</feature>
<feature type="topological domain" description="Cytoplasmic" evidence="5">
    <location>
        <begin position="1020"/>
        <end position="1036"/>
    </location>
</feature>
<feature type="region of interest" description="Disordered" evidence="6">
    <location>
        <begin position="1"/>
        <end position="50"/>
    </location>
</feature>
<feature type="compositionally biased region" description="Basic and acidic residues" evidence="6">
    <location>
        <begin position="14"/>
        <end position="50"/>
    </location>
</feature>
<feature type="active site" description="4-aspartylphosphate intermediate" evidence="1">
    <location>
        <position position="388"/>
    </location>
</feature>
<feature type="binding site" evidence="1">
    <location>
        <position position="729"/>
    </location>
    <ligand>
        <name>Mg(2+)</name>
        <dbReference type="ChEBI" id="CHEBI:18420"/>
    </ligand>
</feature>
<feature type="binding site" evidence="1">
    <location>
        <position position="733"/>
    </location>
    <ligand>
        <name>Mg(2+)</name>
        <dbReference type="ChEBI" id="CHEBI:18420"/>
    </ligand>
</feature>
<feature type="modified residue" description="Phosphoserine; by PKA" evidence="1">
    <location>
        <position position="955"/>
    </location>
</feature>
<feature type="splice variant" id="VSP_000414" description="In isoform Short." evidence="12">
    <location>
        <begin position="1"/>
        <end position="108"/>
    </location>
</feature>
<feature type="turn" evidence="18">
    <location>
        <begin position="56"/>
        <end position="58"/>
    </location>
</feature>
<feature type="helix" evidence="18">
    <location>
        <begin position="61"/>
        <end position="67"/>
    </location>
</feature>
<feature type="turn" evidence="18">
    <location>
        <begin position="72"/>
        <end position="74"/>
    </location>
</feature>
<feature type="helix" evidence="18">
    <location>
        <begin position="78"/>
        <end position="88"/>
    </location>
</feature>
<feature type="helix" evidence="18">
    <location>
        <begin position="101"/>
        <end position="106"/>
    </location>
</feature>
<feature type="helix" evidence="18">
    <location>
        <begin position="107"/>
        <end position="109"/>
    </location>
</feature>
<feature type="strand" evidence="17">
    <location>
        <begin position="111"/>
        <end position="113"/>
    </location>
</feature>
<feature type="helix" evidence="18">
    <location>
        <begin position="114"/>
        <end position="133"/>
    </location>
</feature>
<feature type="helix" evidence="18">
    <location>
        <begin position="141"/>
        <end position="162"/>
    </location>
</feature>
<feature type="helix" evidence="18">
    <location>
        <begin position="169"/>
        <end position="171"/>
    </location>
</feature>
<feature type="strand" evidence="18">
    <location>
        <begin position="173"/>
        <end position="177"/>
    </location>
</feature>
<feature type="strand" evidence="18">
    <location>
        <begin position="179"/>
        <end position="185"/>
    </location>
</feature>
<feature type="strand" evidence="18">
    <location>
        <begin position="188"/>
        <end position="193"/>
    </location>
</feature>
<feature type="helix" evidence="18">
    <location>
        <begin position="194"/>
        <end position="196"/>
    </location>
</feature>
<feature type="strand" evidence="18">
    <location>
        <begin position="202"/>
        <end position="205"/>
    </location>
</feature>
<feature type="strand" evidence="18">
    <location>
        <begin position="213"/>
        <end position="226"/>
    </location>
</feature>
<feature type="helix" evidence="18">
    <location>
        <begin position="228"/>
        <end position="231"/>
    </location>
</feature>
<feature type="strand" evidence="18">
    <location>
        <begin position="237"/>
        <end position="239"/>
    </location>
</feature>
<feature type="helix" evidence="16">
    <location>
        <begin position="248"/>
        <end position="250"/>
    </location>
</feature>
<feature type="strand" evidence="18">
    <location>
        <begin position="252"/>
        <end position="255"/>
    </location>
</feature>
<feature type="strand" evidence="18">
    <location>
        <begin position="260"/>
        <end position="272"/>
    </location>
</feature>
<feature type="helix" evidence="18">
    <location>
        <begin position="274"/>
        <end position="276"/>
    </location>
</feature>
<feature type="helix" evidence="18">
    <location>
        <begin position="278"/>
        <end position="288"/>
    </location>
</feature>
<feature type="helix" evidence="18">
    <location>
        <begin position="295"/>
        <end position="323"/>
    </location>
</feature>
<feature type="turn" evidence="18">
    <location>
        <begin position="324"/>
        <end position="326"/>
    </location>
</feature>
<feature type="helix" evidence="18">
    <location>
        <begin position="329"/>
        <end position="343"/>
    </location>
</feature>
<feature type="helix" evidence="18">
    <location>
        <begin position="348"/>
        <end position="364"/>
    </location>
</feature>
<feature type="strand" evidence="18">
    <location>
        <begin position="367"/>
        <end position="372"/>
    </location>
</feature>
<feature type="helix" evidence="18">
    <location>
        <begin position="375"/>
        <end position="378"/>
    </location>
</feature>
<feature type="strand" evidence="16">
    <location>
        <begin position="379"/>
        <end position="381"/>
    </location>
</feature>
<feature type="strand" evidence="18">
    <location>
        <begin position="384"/>
        <end position="387"/>
    </location>
</feature>
<feature type="helix" evidence="18">
    <location>
        <begin position="389"/>
        <end position="393"/>
    </location>
</feature>
<feature type="strand" evidence="18">
    <location>
        <begin position="399"/>
        <end position="405"/>
    </location>
</feature>
<feature type="strand" evidence="18">
    <location>
        <begin position="408"/>
        <end position="411"/>
    </location>
</feature>
<feature type="strand" evidence="18">
    <location>
        <begin position="427"/>
        <end position="429"/>
    </location>
</feature>
<feature type="helix" evidence="18">
    <location>
        <begin position="430"/>
        <end position="439"/>
    </location>
</feature>
<feature type="strand" evidence="18">
    <location>
        <begin position="450"/>
        <end position="452"/>
    </location>
</feature>
<feature type="helix" evidence="18">
    <location>
        <begin position="454"/>
        <end position="456"/>
    </location>
</feature>
<feature type="strand" evidence="18">
    <location>
        <begin position="459"/>
        <end position="461"/>
    </location>
</feature>
<feature type="helix" evidence="18">
    <location>
        <begin position="463"/>
        <end position="476"/>
    </location>
</feature>
<feature type="helix" evidence="18">
    <location>
        <begin position="480"/>
        <end position="485"/>
    </location>
</feature>
<feature type="strand" evidence="18">
    <location>
        <begin position="488"/>
        <end position="492"/>
    </location>
</feature>
<feature type="turn" evidence="18">
    <location>
        <begin position="496"/>
        <end position="498"/>
    </location>
</feature>
<feature type="strand" evidence="18">
    <location>
        <begin position="500"/>
        <end position="506"/>
    </location>
</feature>
<feature type="turn" evidence="18">
    <location>
        <begin position="510"/>
        <end position="512"/>
    </location>
</feature>
<feature type="strand" evidence="18">
    <location>
        <begin position="515"/>
        <end position="521"/>
    </location>
</feature>
<feature type="helix" evidence="18">
    <location>
        <begin position="523"/>
        <end position="528"/>
    </location>
</feature>
<feature type="strand" evidence="18">
    <location>
        <begin position="530"/>
        <end position="535"/>
    </location>
</feature>
<feature type="strand" evidence="18">
    <location>
        <begin position="538"/>
        <end position="541"/>
    </location>
</feature>
<feature type="helix" evidence="18">
    <location>
        <begin position="544"/>
        <end position="558"/>
    </location>
</feature>
<feature type="turn" evidence="18">
    <location>
        <begin position="559"/>
        <end position="561"/>
    </location>
</feature>
<feature type="strand" evidence="18">
    <location>
        <begin position="563"/>
        <end position="572"/>
    </location>
</feature>
<feature type="turn" evidence="18">
    <location>
        <begin position="574"/>
        <end position="576"/>
    </location>
</feature>
<feature type="turn" evidence="18">
    <location>
        <begin position="585"/>
        <end position="587"/>
    </location>
</feature>
<feature type="strand" evidence="18">
    <location>
        <begin position="588"/>
        <end position="590"/>
    </location>
</feature>
<feature type="strand" evidence="18">
    <location>
        <begin position="593"/>
        <end position="604"/>
    </location>
</feature>
<feature type="helix" evidence="18">
    <location>
        <begin position="611"/>
        <end position="620"/>
    </location>
</feature>
<feature type="strand" evidence="18">
    <location>
        <begin position="624"/>
        <end position="628"/>
    </location>
</feature>
<feature type="helix" evidence="18">
    <location>
        <begin position="633"/>
        <end position="642"/>
    </location>
</feature>
<feature type="strand" evidence="17">
    <location>
        <begin position="644"/>
        <end position="646"/>
    </location>
</feature>
<feature type="helix" evidence="18">
    <location>
        <begin position="653"/>
        <end position="660"/>
    </location>
</feature>
<feature type="turn" evidence="18">
    <location>
        <begin position="664"/>
        <end position="666"/>
    </location>
</feature>
<feature type="turn" evidence="18">
    <location>
        <begin position="669"/>
        <end position="671"/>
    </location>
</feature>
<feature type="strand" evidence="18">
    <location>
        <begin position="674"/>
        <end position="678"/>
    </location>
</feature>
<feature type="helix" evidence="18">
    <location>
        <begin position="679"/>
        <end position="683"/>
    </location>
</feature>
<feature type="helix" evidence="18">
    <location>
        <begin position="687"/>
        <end position="696"/>
    </location>
</feature>
<feature type="strand" evidence="18">
    <location>
        <begin position="698"/>
        <end position="704"/>
    </location>
</feature>
<feature type="helix" evidence="18">
    <location>
        <begin position="707"/>
        <end position="718"/>
    </location>
</feature>
<feature type="turn" evidence="18">
    <location>
        <begin position="719"/>
        <end position="721"/>
    </location>
</feature>
<feature type="strand" evidence="18">
    <location>
        <begin position="724"/>
        <end position="728"/>
    </location>
</feature>
<feature type="helix" evidence="18">
    <location>
        <begin position="731"/>
        <end position="733"/>
    </location>
</feature>
<feature type="helix" evidence="18">
    <location>
        <begin position="734"/>
        <end position="739"/>
    </location>
</feature>
<feature type="strand" evidence="18">
    <location>
        <begin position="740"/>
        <end position="749"/>
    </location>
</feature>
<feature type="helix" evidence="18">
    <location>
        <begin position="752"/>
        <end position="756"/>
    </location>
</feature>
<feature type="strand" evidence="18">
    <location>
        <begin position="759"/>
        <end position="762"/>
    </location>
</feature>
<feature type="helix" evidence="18">
    <location>
        <begin position="768"/>
        <end position="808"/>
    </location>
</feature>
<feature type="helix" evidence="18">
    <location>
        <begin position="816"/>
        <end position="824"/>
    </location>
</feature>
<feature type="turn" evidence="16">
    <location>
        <begin position="825"/>
        <end position="827"/>
    </location>
</feature>
<feature type="helix" evidence="18">
    <location>
        <begin position="828"/>
        <end position="833"/>
    </location>
</feature>
<feature type="helix" evidence="18">
    <location>
        <begin position="834"/>
        <end position="836"/>
    </location>
</feature>
<feature type="helix" evidence="18">
    <location>
        <begin position="843"/>
        <end position="845"/>
    </location>
</feature>
<feature type="turn" evidence="18">
    <location>
        <begin position="851"/>
        <end position="853"/>
    </location>
</feature>
<feature type="helix" evidence="18">
    <location>
        <begin position="859"/>
        <end position="866"/>
    </location>
</feature>
<feature type="helix" evidence="18">
    <location>
        <begin position="869"/>
        <end position="886"/>
    </location>
</feature>
<feature type="turn" evidence="18">
    <location>
        <begin position="887"/>
        <end position="889"/>
    </location>
</feature>
<feature type="helix" evidence="18">
    <location>
        <begin position="892"/>
        <end position="895"/>
    </location>
</feature>
<feature type="helix" evidence="18">
    <location>
        <begin position="899"/>
        <end position="902"/>
    </location>
</feature>
<feature type="helix" evidence="18">
    <location>
        <begin position="920"/>
        <end position="948"/>
    </location>
</feature>
<feature type="strand" evidence="18">
    <location>
        <begin position="952"/>
        <end position="954"/>
    </location>
</feature>
<feature type="helix" evidence="18">
    <location>
        <begin position="956"/>
        <end position="959"/>
    </location>
</feature>
<feature type="strand" evidence="18">
    <location>
        <begin position="961"/>
        <end position="963"/>
    </location>
</feature>
<feature type="helix" evidence="18">
    <location>
        <begin position="965"/>
        <end position="983"/>
    </location>
</feature>
<feature type="turn" evidence="18">
    <location>
        <begin position="984"/>
        <end position="989"/>
    </location>
</feature>
<feature type="helix" evidence="18">
    <location>
        <begin position="998"/>
        <end position="1001"/>
    </location>
</feature>
<feature type="turn" evidence="18">
    <location>
        <begin position="1002"/>
        <end position="1004"/>
    </location>
</feature>
<feature type="helix" evidence="18">
    <location>
        <begin position="1005"/>
        <end position="1024"/>
    </location>
</feature>
<feature type="helix" evidence="18">
    <location>
        <begin position="1029"/>
        <end position="1034"/>
    </location>
</feature>
<dbReference type="EC" id="7.2.2.19" evidence="7 9"/>
<dbReference type="EC" id="7.2.2.13" evidence="7 9"/>
<dbReference type="EMBL" id="M90398">
    <property type="protein sequence ID" value="AAA40779.1"/>
    <property type="molecule type" value="mRNA"/>
</dbReference>
<dbReference type="EMBL" id="U94911">
    <property type="protein sequence ID" value="AAB93900.1"/>
    <property type="molecule type" value="Genomic_DNA"/>
</dbReference>
<dbReference type="EMBL" id="U94912">
    <property type="protein sequence ID" value="AAB93901.1"/>
    <property type="molecule type" value="mRNA"/>
</dbReference>
<dbReference type="EMBL" id="U94913">
    <property type="protein sequence ID" value="AAB93902.1"/>
    <property type="molecule type" value="mRNA"/>
</dbReference>
<dbReference type="PIR" id="A42895">
    <property type="entry name" value="A42895"/>
</dbReference>
<dbReference type="PDB" id="7X20">
    <property type="method" value="X-ray"/>
    <property type="resolution" value="3.30 A"/>
    <property type="chains" value="A=53-1036"/>
</dbReference>
<dbReference type="PDB" id="7X21">
    <property type="method" value="EM"/>
    <property type="resolution" value="2.80 A"/>
    <property type="chains" value="A=53-1036"/>
</dbReference>
<dbReference type="PDB" id="7X22">
    <property type="method" value="EM"/>
    <property type="resolution" value="3.00 A"/>
    <property type="chains" value="A=53-1036"/>
</dbReference>
<dbReference type="PDB" id="7X23">
    <property type="method" value="EM"/>
    <property type="resolution" value="3.20 A"/>
    <property type="chains" value="A=53-1036"/>
</dbReference>
<dbReference type="PDB" id="7X24">
    <property type="method" value="EM"/>
    <property type="resolution" value="3.40 A"/>
    <property type="chains" value="A=53-1036"/>
</dbReference>
<dbReference type="PDB" id="8IJL">
    <property type="method" value="EM"/>
    <property type="resolution" value="2.62 A"/>
    <property type="chains" value="A=53-1036"/>
</dbReference>
<dbReference type="PDB" id="8IJM">
    <property type="method" value="EM"/>
    <property type="resolution" value="3.13 A"/>
    <property type="chains" value="A=53-1036"/>
</dbReference>
<dbReference type="PDBsum" id="7X20"/>
<dbReference type="PDBsum" id="7X21"/>
<dbReference type="PDBsum" id="7X22"/>
<dbReference type="PDBsum" id="7X23"/>
<dbReference type="PDBsum" id="7X24"/>
<dbReference type="PDBsum" id="8IJL"/>
<dbReference type="PDBsum" id="8IJM"/>
<dbReference type="EMDB" id="EMD-32954"/>
<dbReference type="EMDB" id="EMD-32955"/>
<dbReference type="EMDB" id="EMD-32956"/>
<dbReference type="EMDB" id="EMD-32957"/>
<dbReference type="SMR" id="P54708"/>
<dbReference type="FunCoup" id="P54708">
    <property type="interactions" value="66"/>
</dbReference>
<dbReference type="STRING" id="10116.ENSRNOP00000028093"/>
<dbReference type="TCDB" id="3.A.3.1.4">
    <property type="family name" value="the p-type atpase (p-atpase) superfamily"/>
</dbReference>
<dbReference type="iPTMnet" id="P54708"/>
<dbReference type="PhosphoSitePlus" id="P54708"/>
<dbReference type="jPOST" id="P54708"/>
<dbReference type="PaxDb" id="10116-ENSRNOP00000028093"/>
<dbReference type="UCSC" id="RGD:620569">
    <molecule id="P54708-1"/>
    <property type="organism name" value="rat"/>
</dbReference>
<dbReference type="AGR" id="RGD:620569"/>
<dbReference type="RGD" id="620569">
    <property type="gene designation" value="Atp12a"/>
</dbReference>
<dbReference type="eggNOG" id="KOG0203">
    <property type="taxonomic scope" value="Eukaryota"/>
</dbReference>
<dbReference type="InParanoid" id="P54708"/>
<dbReference type="PhylomeDB" id="P54708"/>
<dbReference type="Reactome" id="R-RNO-936837">
    <property type="pathway name" value="Ion transport by P-type ATPases"/>
</dbReference>
<dbReference type="PRO" id="PR:P54708"/>
<dbReference type="Proteomes" id="UP000002494">
    <property type="component" value="Unplaced"/>
</dbReference>
<dbReference type="GO" id="GO:0016324">
    <property type="term" value="C:apical plasma membrane"/>
    <property type="evidence" value="ECO:0000314"/>
    <property type="project" value="UniProtKB"/>
</dbReference>
<dbReference type="GO" id="GO:0016323">
    <property type="term" value="C:basolateral plasma membrane"/>
    <property type="evidence" value="ECO:0000266"/>
    <property type="project" value="RGD"/>
</dbReference>
<dbReference type="GO" id="GO:0005886">
    <property type="term" value="C:plasma membrane"/>
    <property type="evidence" value="ECO:0000318"/>
    <property type="project" value="GO_Central"/>
</dbReference>
<dbReference type="GO" id="GO:0005524">
    <property type="term" value="F:ATP binding"/>
    <property type="evidence" value="ECO:0007669"/>
    <property type="project" value="UniProtKB-KW"/>
</dbReference>
<dbReference type="GO" id="GO:0016887">
    <property type="term" value="F:ATP hydrolysis activity"/>
    <property type="evidence" value="ECO:0007669"/>
    <property type="project" value="InterPro"/>
</dbReference>
<dbReference type="GO" id="GO:0046872">
    <property type="term" value="F:metal ion binding"/>
    <property type="evidence" value="ECO:0007669"/>
    <property type="project" value="UniProtKB-KW"/>
</dbReference>
<dbReference type="GO" id="GO:0008900">
    <property type="term" value="F:P-type potassium:proton transporter activity"/>
    <property type="evidence" value="ECO:0000266"/>
    <property type="project" value="RGD"/>
</dbReference>
<dbReference type="GO" id="GO:0005391">
    <property type="term" value="F:P-type sodium:potassium-exchanging transporter activity"/>
    <property type="evidence" value="ECO:0000250"/>
    <property type="project" value="UniProtKB"/>
</dbReference>
<dbReference type="GO" id="GO:0030007">
    <property type="term" value="P:intracellular potassium ion homeostasis"/>
    <property type="evidence" value="ECO:0000318"/>
    <property type="project" value="GO_Central"/>
</dbReference>
<dbReference type="GO" id="GO:0006883">
    <property type="term" value="P:intracellular sodium ion homeostasis"/>
    <property type="evidence" value="ECO:0000318"/>
    <property type="project" value="GO_Central"/>
</dbReference>
<dbReference type="GO" id="GO:0055075">
    <property type="term" value="P:potassium ion homeostasis"/>
    <property type="evidence" value="ECO:0000266"/>
    <property type="project" value="RGD"/>
</dbReference>
<dbReference type="GO" id="GO:1990573">
    <property type="term" value="P:potassium ion import across plasma membrane"/>
    <property type="evidence" value="ECO:0000318"/>
    <property type="project" value="GO_Central"/>
</dbReference>
<dbReference type="GO" id="GO:1902600">
    <property type="term" value="P:proton transmembrane transport"/>
    <property type="evidence" value="ECO:0000318"/>
    <property type="project" value="GO_Central"/>
</dbReference>
<dbReference type="GO" id="GO:0006885">
    <property type="term" value="P:regulation of pH"/>
    <property type="evidence" value="ECO:0000266"/>
    <property type="project" value="RGD"/>
</dbReference>
<dbReference type="GO" id="GO:0010038">
    <property type="term" value="P:response to metal ion"/>
    <property type="evidence" value="ECO:0000314"/>
    <property type="project" value="RGD"/>
</dbReference>
<dbReference type="GO" id="GO:0036376">
    <property type="term" value="P:sodium ion export across plasma membrane"/>
    <property type="evidence" value="ECO:0000318"/>
    <property type="project" value="GO_Central"/>
</dbReference>
<dbReference type="CDD" id="cd02608">
    <property type="entry name" value="P-type_ATPase_Na-K_like"/>
    <property type="match status" value="1"/>
</dbReference>
<dbReference type="FunFam" id="1.20.1110.10:FF:000079">
    <property type="entry name" value="Sodium/potassium-transporting ATPase subunit alpha"/>
    <property type="match status" value="1"/>
</dbReference>
<dbReference type="FunFam" id="2.70.150.10:FF:000003">
    <property type="entry name" value="Sodium/potassium-transporting ATPase subunit alpha"/>
    <property type="match status" value="1"/>
</dbReference>
<dbReference type="FunFam" id="3.40.1110.10:FF:000001">
    <property type="entry name" value="Sodium/potassium-transporting ATPase subunit alpha"/>
    <property type="match status" value="1"/>
</dbReference>
<dbReference type="FunFam" id="3.40.50.1000:FF:000004">
    <property type="entry name" value="Sodium/potassium-transporting ATPase subunit alpha"/>
    <property type="match status" value="1"/>
</dbReference>
<dbReference type="FunFam" id="1.20.1110.10:FF:000095">
    <property type="entry name" value="Sodium/potassium-transporting ATPase subunit alpha-1"/>
    <property type="match status" value="1"/>
</dbReference>
<dbReference type="Gene3D" id="3.40.1110.10">
    <property type="entry name" value="Calcium-transporting ATPase, cytoplasmic domain N"/>
    <property type="match status" value="1"/>
</dbReference>
<dbReference type="Gene3D" id="2.70.150.10">
    <property type="entry name" value="Calcium-transporting ATPase, cytoplasmic transduction domain A"/>
    <property type="match status" value="1"/>
</dbReference>
<dbReference type="Gene3D" id="1.20.1110.10">
    <property type="entry name" value="Calcium-transporting ATPase, transmembrane domain"/>
    <property type="match status" value="1"/>
</dbReference>
<dbReference type="Gene3D" id="3.40.50.1000">
    <property type="entry name" value="HAD superfamily/HAD-like"/>
    <property type="match status" value="1"/>
</dbReference>
<dbReference type="InterPro" id="IPR006068">
    <property type="entry name" value="ATPase_P-typ_cation-transptr_C"/>
</dbReference>
<dbReference type="InterPro" id="IPR004014">
    <property type="entry name" value="ATPase_P-typ_cation-transptr_N"/>
</dbReference>
<dbReference type="InterPro" id="IPR023299">
    <property type="entry name" value="ATPase_P-typ_cyto_dom_N"/>
</dbReference>
<dbReference type="InterPro" id="IPR018303">
    <property type="entry name" value="ATPase_P-typ_P_site"/>
</dbReference>
<dbReference type="InterPro" id="IPR023298">
    <property type="entry name" value="ATPase_P-typ_TM_dom_sf"/>
</dbReference>
<dbReference type="InterPro" id="IPR008250">
    <property type="entry name" value="ATPase_P-typ_transduc_dom_A_sf"/>
</dbReference>
<dbReference type="InterPro" id="IPR050510">
    <property type="entry name" value="Cation_transp_ATPase_P-type"/>
</dbReference>
<dbReference type="InterPro" id="IPR036412">
    <property type="entry name" value="HAD-like_sf"/>
</dbReference>
<dbReference type="InterPro" id="IPR023214">
    <property type="entry name" value="HAD_sf"/>
</dbReference>
<dbReference type="InterPro" id="IPR005775">
    <property type="entry name" value="P-type_ATPase_IIC"/>
</dbReference>
<dbReference type="InterPro" id="IPR001757">
    <property type="entry name" value="P_typ_ATPase"/>
</dbReference>
<dbReference type="InterPro" id="IPR044492">
    <property type="entry name" value="P_typ_ATPase_HD_dom"/>
</dbReference>
<dbReference type="NCBIfam" id="TIGR01106">
    <property type="entry name" value="ATPase-IIC_X-K"/>
    <property type="match status" value="1"/>
</dbReference>
<dbReference type="NCBIfam" id="TIGR01494">
    <property type="entry name" value="ATPase_P-type"/>
    <property type="match status" value="2"/>
</dbReference>
<dbReference type="PANTHER" id="PTHR43294:SF1">
    <property type="entry name" value="POTASSIUM-TRANSPORTING ATPASE ALPHA CHAIN 2"/>
    <property type="match status" value="1"/>
</dbReference>
<dbReference type="PANTHER" id="PTHR43294">
    <property type="entry name" value="SODIUM/POTASSIUM-TRANSPORTING ATPASE SUBUNIT ALPHA"/>
    <property type="match status" value="1"/>
</dbReference>
<dbReference type="Pfam" id="PF13246">
    <property type="entry name" value="Cation_ATPase"/>
    <property type="match status" value="1"/>
</dbReference>
<dbReference type="Pfam" id="PF00689">
    <property type="entry name" value="Cation_ATPase_C"/>
    <property type="match status" value="1"/>
</dbReference>
<dbReference type="Pfam" id="PF00690">
    <property type="entry name" value="Cation_ATPase_N"/>
    <property type="match status" value="1"/>
</dbReference>
<dbReference type="Pfam" id="PF00122">
    <property type="entry name" value="E1-E2_ATPase"/>
    <property type="match status" value="1"/>
</dbReference>
<dbReference type="Pfam" id="PF00702">
    <property type="entry name" value="Hydrolase"/>
    <property type="match status" value="1"/>
</dbReference>
<dbReference type="PRINTS" id="PR00119">
    <property type="entry name" value="CATATPASE"/>
</dbReference>
<dbReference type="PRINTS" id="PR00121">
    <property type="entry name" value="NAKATPASE"/>
</dbReference>
<dbReference type="SFLD" id="SFLDS00003">
    <property type="entry name" value="Haloacid_Dehalogenase"/>
    <property type="match status" value="1"/>
</dbReference>
<dbReference type="SFLD" id="SFLDF00027">
    <property type="entry name" value="p-type_atpase"/>
    <property type="match status" value="1"/>
</dbReference>
<dbReference type="SMART" id="SM00831">
    <property type="entry name" value="Cation_ATPase_N"/>
    <property type="match status" value="1"/>
</dbReference>
<dbReference type="SUPFAM" id="SSF81653">
    <property type="entry name" value="Calcium ATPase, transduction domain A"/>
    <property type="match status" value="1"/>
</dbReference>
<dbReference type="SUPFAM" id="SSF81665">
    <property type="entry name" value="Calcium ATPase, transmembrane domain M"/>
    <property type="match status" value="1"/>
</dbReference>
<dbReference type="SUPFAM" id="SSF56784">
    <property type="entry name" value="HAD-like"/>
    <property type="match status" value="1"/>
</dbReference>
<dbReference type="SUPFAM" id="SSF81660">
    <property type="entry name" value="Metal cation-transporting ATPase, ATP-binding domain N"/>
    <property type="match status" value="1"/>
</dbReference>
<dbReference type="PROSITE" id="PS00154">
    <property type="entry name" value="ATPASE_E1_E2"/>
    <property type="match status" value="1"/>
</dbReference>
<proteinExistence type="evidence at protein level"/>
<name>AT12A_RAT</name>
<protein>
    <recommendedName>
        <fullName>Potassium-transporting ATPase alpha chain 2</fullName>
    </recommendedName>
    <alternativeName>
        <fullName evidence="3">HK alpha 2</fullName>
    </alternativeName>
    <alternativeName>
        <fullName>Non-gastric H(+)/K(+) ATPase subunit alpha</fullName>
        <ecNumber evidence="7 9">7.2.2.19</ecNumber>
    </alternativeName>
    <alternativeName>
        <fullName>Non-gastric Na(+)/K(+) ATPase subunit alpha</fullName>
        <ecNumber evidence="7 9">7.2.2.13</ecNumber>
    </alternativeName>
    <alternativeName>
        <fullName>Proton pump</fullName>
    </alternativeName>
    <alternativeName>
        <fullName evidence="2">Sodium pump</fullName>
    </alternativeName>
</protein>
<sequence length="1036" mass="114975">MRRKTEIYSVELNGTKDVKPADQRDDKKFKGAKNKDLEPNKSHEKEELKKELDLDDHRLSNTELEQKYGTNIIQGLSSVRATELLARDGPNTLTPPKQTPEIIKFLKQMVGGFSILLWIGAALCWIAFVIQYVNNSASLDNVYLGAILVLVVILTGIFAYYQEAKSTNIMASFSKMIPQQALVIRDAEKKVISAEQLVVGDVVEIKGGDQIPADIRLVFSQGCKVDNSSLTGESEPQARSTEFTHENPLETKNIGFYSTTCLEGTATGIVINTGDRTIIGRIASLASGVGSEKTPIAIEIEHFVHIVAGVAVSIDIIFFITAVCMKYYVLDAIIFLISIIVANVPEGLLATVTVTLSLTAKRMAKKNCLVKNLEAVETLGSTSIICSDKTGTLTQNRMTVAHLWFDNQIFVADTSENQTKQAFDQSSGTWASLSKIITLCNRAEFRPGQESVPIMKRTVVGDASETALLKFSEVILGDVMGIRKRNHKVAEIPFNSTNKFQLSIHETEDPNNKRFLVVMKGAPERILEKCSTIMINGQEQPLDKSSADSFHTAYMELGGLGERVLGFCHLYLPAEQFPQSYIFDVDSVNFPTSNFCFVGLLSMIDPPRSTVPDAVSKCRSAGIKVIMVTGDHPITAKAIAKSVGIISANNETVEDIAKRRNIAVEQVNKREAKAAVVTGMELKDMTPEQLDELLTNYQEIVFARTSPQQKLIIVEGCQRQDAIVAVTGDGVNDSPALKKADIGIAMGIAGSDAAKNAADMVLLDDNFASIVTGVEEGRLIFDNLKKTIAYTLTKNIAELCPFLIYIVAGLPLPIGTITILFIDLGTDIIPSIALAYEKAESDIMNRKPRHKKKDRLVNTQLAIYSYLHIGLMQALGGFLVYFTVYAQQGFWPTSLINLRVAWETDDINDLEDSYGQEWTRYQRKYLEWTGSTAFFVAIMIQQIADLIIRKTRRNSIFQQGLFRNKVIWVGIASQVIVALILSYGLGSVPALSFTMLRVQYWFVAVPHAILIWVYDEMRKLFIRLYPGSWWDKNMYY</sequence>
<evidence type="ECO:0000250" key="1"/>
<evidence type="ECO:0000250" key="2">
    <source>
        <dbReference type="UniProtKB" id="P54707"/>
    </source>
</evidence>
<evidence type="ECO:0000250" key="3">
    <source>
        <dbReference type="UniProtKB" id="Q9TV52"/>
    </source>
</evidence>
<evidence type="ECO:0000250" key="4">
    <source>
        <dbReference type="UniProtKB" id="Q9Z1W8"/>
    </source>
</evidence>
<evidence type="ECO:0000255" key="5"/>
<evidence type="ECO:0000256" key="6">
    <source>
        <dbReference type="SAM" id="MobiDB-lite"/>
    </source>
</evidence>
<evidence type="ECO:0000269" key="7">
    <source>
    </source>
</evidence>
<evidence type="ECO:0000269" key="8">
    <source>
    </source>
</evidence>
<evidence type="ECO:0000269" key="9">
    <source>
    </source>
</evidence>
<evidence type="ECO:0000269" key="10">
    <source>
    </source>
</evidence>
<evidence type="ECO:0000269" key="11">
    <source>
    </source>
</evidence>
<evidence type="ECO:0000303" key="12">
    <source>
    </source>
</evidence>
<evidence type="ECO:0000305" key="13"/>
<evidence type="ECO:0000305" key="14">
    <source>
    </source>
</evidence>
<evidence type="ECO:0000305" key="15">
    <source>
    </source>
</evidence>
<evidence type="ECO:0007829" key="16">
    <source>
        <dbReference type="PDB" id="7X21"/>
    </source>
</evidence>
<evidence type="ECO:0007829" key="17">
    <source>
        <dbReference type="PDB" id="7X24"/>
    </source>
</evidence>
<evidence type="ECO:0007829" key="18">
    <source>
        <dbReference type="PDB" id="8IJL"/>
    </source>
</evidence>